<sequence>MVPVNPALPGRSYPPTPPYLVAREKIREFASAVFATNPISFDVEAARAAGHADLVGPPTFPIVVQEYTLQQLLADPEAGIDFSRVVHGDQRFTYTRAVVAGDQLTATMTVTSVKSLGAHSMVTAESMIVDAGGEHVVTAISTLVVRGDE</sequence>
<name>Y281_LEIXX</name>
<keyword id="KW-1185">Reference proteome</keyword>
<protein>
    <recommendedName>
        <fullName evidence="1">UPF0336 protein Lxx02810</fullName>
    </recommendedName>
</protein>
<proteinExistence type="inferred from homology"/>
<reference key="1">
    <citation type="journal article" date="2004" name="Mol. Plant Microbe Interact.">
        <title>The genome sequence of the Gram-positive sugarcane pathogen Leifsonia xyli subsp. xyli.</title>
        <authorList>
            <person name="Monteiro-Vitorello C.B."/>
            <person name="Camargo L.E.A."/>
            <person name="Van Sluys M.A."/>
            <person name="Kitajima J.P."/>
            <person name="Truffi D."/>
            <person name="do Amaral A.M."/>
            <person name="Harakava R."/>
            <person name="de Oliveira J.C.F."/>
            <person name="Wood D."/>
            <person name="de Oliveira M.C."/>
            <person name="Miyaki C.Y."/>
            <person name="Takita M.A."/>
            <person name="da Silva A.C.R."/>
            <person name="Furlan L.R."/>
            <person name="Carraro D.M."/>
            <person name="Camarotte G."/>
            <person name="Almeida N.F. Jr."/>
            <person name="Carrer H."/>
            <person name="Coutinho L.L."/>
            <person name="El-Dorry H.A."/>
            <person name="Ferro M.I.T."/>
            <person name="Gagliardi P.R."/>
            <person name="Giglioti E."/>
            <person name="Goldman M.H.S."/>
            <person name="Goldman G.H."/>
            <person name="Kimura E.T."/>
            <person name="Ferro E.S."/>
            <person name="Kuramae E.E."/>
            <person name="Lemos E.G.M."/>
            <person name="Lemos M.V.F."/>
            <person name="Mauro S.M.Z."/>
            <person name="Machado M.A."/>
            <person name="Marino C.L."/>
            <person name="Menck C.F."/>
            <person name="Nunes L.R."/>
            <person name="Oliveira R.C."/>
            <person name="Pereira G.G."/>
            <person name="Siqueira W."/>
            <person name="de Souza A.A."/>
            <person name="Tsai S.M."/>
            <person name="Zanca A.S."/>
            <person name="Simpson A.J.G."/>
            <person name="Brumbley S.M."/>
            <person name="Setubal J.C."/>
        </authorList>
    </citation>
    <scope>NUCLEOTIDE SEQUENCE [LARGE SCALE GENOMIC DNA]</scope>
    <source>
        <strain>CTCB07</strain>
    </source>
</reference>
<comment type="similarity">
    <text evidence="1">Belongs to the UPF0336 family.</text>
</comment>
<accession>Q6AH32</accession>
<dbReference type="EMBL" id="AE016822">
    <property type="protein sequence ID" value="AAT88313.1"/>
    <property type="molecule type" value="Genomic_DNA"/>
</dbReference>
<dbReference type="SMR" id="Q6AH32"/>
<dbReference type="STRING" id="281090.Lxx02810"/>
<dbReference type="KEGG" id="lxx:Lxx02810"/>
<dbReference type="eggNOG" id="COG2030">
    <property type="taxonomic scope" value="Bacteria"/>
</dbReference>
<dbReference type="HOGENOM" id="CLU_116276_0_0_11"/>
<dbReference type="Proteomes" id="UP000001306">
    <property type="component" value="Chromosome"/>
</dbReference>
<dbReference type="CDD" id="cd03441">
    <property type="entry name" value="R_hydratase_like"/>
    <property type="match status" value="1"/>
</dbReference>
<dbReference type="Gene3D" id="3.10.129.10">
    <property type="entry name" value="Hotdog Thioesterase"/>
    <property type="match status" value="1"/>
</dbReference>
<dbReference type="HAMAP" id="MF_00799">
    <property type="entry name" value="UPF0336"/>
    <property type="match status" value="1"/>
</dbReference>
<dbReference type="InterPro" id="IPR039569">
    <property type="entry name" value="FAS1-like_DH_region"/>
</dbReference>
<dbReference type="InterPro" id="IPR016709">
    <property type="entry name" value="HadA-like"/>
</dbReference>
<dbReference type="InterPro" id="IPR029069">
    <property type="entry name" value="HotDog_dom_sf"/>
</dbReference>
<dbReference type="Pfam" id="PF13452">
    <property type="entry name" value="FAS1_DH_region"/>
    <property type="match status" value="1"/>
</dbReference>
<dbReference type="PIRSF" id="PIRSF018072">
    <property type="entry name" value="UCP018072"/>
    <property type="match status" value="1"/>
</dbReference>
<dbReference type="SUPFAM" id="SSF54637">
    <property type="entry name" value="Thioesterase/thiol ester dehydrase-isomerase"/>
    <property type="match status" value="1"/>
</dbReference>
<evidence type="ECO:0000255" key="1">
    <source>
        <dbReference type="HAMAP-Rule" id="MF_00799"/>
    </source>
</evidence>
<feature type="chain" id="PRO_0000216132" description="UPF0336 protein Lxx02810">
    <location>
        <begin position="1"/>
        <end position="149"/>
    </location>
</feature>
<organism>
    <name type="scientific">Leifsonia xyli subsp. xyli (strain CTCB07)</name>
    <dbReference type="NCBI Taxonomy" id="281090"/>
    <lineage>
        <taxon>Bacteria</taxon>
        <taxon>Bacillati</taxon>
        <taxon>Actinomycetota</taxon>
        <taxon>Actinomycetes</taxon>
        <taxon>Micrococcales</taxon>
        <taxon>Microbacteriaceae</taxon>
        <taxon>Leifsonia</taxon>
    </lineage>
</organism>
<gene>
    <name type="ordered locus">Lxx02810</name>
</gene>